<sequence>MTRTDPPDLLVSTVYQDIKVVDPGLTSKRQPCERSVARPAAPTPFNKRHCRSFDFLEALDEPTMETHPEPPPPEPAPPRARPRDSEPRRRTRSKSAPRASQGLATAPASPPVLQRRGREAQRAVRVEGSPRREPSYPALRALANELHPIKLQPQRGGPGRIAPLCATPGRCAPPEPPSGPVPHVRCRLDIKPDEAVLQHAARSSRSCAPRETTSWARTAPQFHGLTVPGPRHVALSRTPTPSDLYCTDPRTLYCDGPLPGPRDYLEHRSQPFTTPPGPTQFFYTEEPEGYAGSFTTSPGLPFDGYCSRPYLSEEPPRPSPRRGGSYYAGEVRTFPIQEPPSRSYYGETTRAYGMPFVPRYVPEEPRAHPGARTFYTEDFGRYRERDVLARTYPHPRSSPPWADWGPRPYRTLQVMPPPAPGPLLASWHGGTGTSPPRLATDSRHYSRSWDNILAPGPRREDPLGRGRSYENLLGREVRDTRGSSPEGRRPPVVVNLSTSPRRYAALSLSETSLTEKGRAGESLGRNWYVTPEITITDNDLRSVDRPTAKGWELPGGRPRQPVSTVPEGPASSRQRSLEQLDELITDLVIDSRSPAQAPEPAAEGLGRQLRRLLDSRAAGPGGATLLAPSRSPPASAGSTEEPTGSGEAADASPEPSADEDDLMTCSNARCRRTETMFNACLYFKSCHSCYTYYCSRLCRREDWDAHKARCVYGRVGSVCRHVLQFCRDSSPVHRAFSRIARVGFLSRGRGVLFLGFPSPGSADNFLRFGLEGLLLSPTYLSLRELATHAAPLGSYARELAAAGRLYEPAECFLLSVSVAVGPSAAPPGAAARPAPRTPGPTVRKFAKVALAAGSPTRPPPARGGEPDMETLILTPPPGTAGLDEEGEAGRRAREVAFIHIQRELRMRGVFLRHEFPRVYEQLCEFVEANRRFTPTTIYPTDRRTGRPFMCMIMAASEPRALDWVASANLLDDIM</sequence>
<dbReference type="EMBL" id="AL732590">
    <property type="status" value="NOT_ANNOTATED_CDS"/>
    <property type="molecule type" value="Genomic_DNA"/>
</dbReference>
<dbReference type="EMBL" id="BC065698">
    <property type="protein sequence ID" value="AAH65698.1"/>
    <property type="molecule type" value="mRNA"/>
</dbReference>
<dbReference type="CCDS" id="CCDS50532.1">
    <molecule id="A2AJA9-1"/>
</dbReference>
<dbReference type="RefSeq" id="NP_001005424.2">
    <molecule id="A2AJA9-1"/>
    <property type="nucleotide sequence ID" value="NM_001005424.3"/>
</dbReference>
<dbReference type="RefSeq" id="NP_001386174.1">
    <molecule id="A2AJA9-1"/>
    <property type="nucleotide sequence ID" value="NM_001399245.1"/>
</dbReference>
<dbReference type="BioGRID" id="237896">
    <property type="interactions" value="5"/>
</dbReference>
<dbReference type="FunCoup" id="A2AJA9">
    <property type="interactions" value="88"/>
</dbReference>
<dbReference type="IntAct" id="A2AJA9">
    <property type="interactions" value="1"/>
</dbReference>
<dbReference type="MINT" id="A2AJA9"/>
<dbReference type="STRING" id="10090.ENSMUSP00000109855"/>
<dbReference type="GlyGen" id="A2AJA9">
    <property type="glycosylation" value="9 sites, 1 O-linked glycan (5 sites)"/>
</dbReference>
<dbReference type="iPTMnet" id="A2AJA9"/>
<dbReference type="PhosphoSitePlus" id="A2AJA9"/>
<dbReference type="SwissPalm" id="A2AJA9"/>
<dbReference type="PaxDb" id="10090-ENSMUSP00000109855"/>
<dbReference type="PeptideAtlas" id="A2AJA9"/>
<dbReference type="ProteomicsDB" id="296146">
    <molecule id="A2AJA9-1"/>
</dbReference>
<dbReference type="ProteomicsDB" id="296147">
    <molecule id="A2AJA9-2"/>
</dbReference>
<dbReference type="Antibodypedia" id="32260">
    <property type="antibodies" value="44 antibodies from 9 providers"/>
</dbReference>
<dbReference type="DNASU" id="381353"/>
<dbReference type="Ensembl" id="ENSMUST00000114217.3">
    <molecule id="A2AJA9-1"/>
    <property type="protein sequence ID" value="ENSMUSP00000109855.2"/>
    <property type="gene ID" value="ENSMUSG00000029419.9"/>
</dbReference>
<dbReference type="Ensembl" id="ENSMUST00000188161.2">
    <molecule id="A2AJA9-1"/>
    <property type="protein sequence ID" value="ENSMUSP00000140763.2"/>
    <property type="gene ID" value="ENSMUSG00000029419.9"/>
</dbReference>
<dbReference type="Ensembl" id="ENSMUST00000191602.2">
    <molecule id="A2AJA9-1"/>
    <property type="protein sequence ID" value="ENSMUSP00000140109.2"/>
    <property type="gene ID" value="ENSMUSG00000029419.9"/>
</dbReference>
<dbReference type="GeneID" id="381353"/>
<dbReference type="KEGG" id="mmu:381353"/>
<dbReference type="UCSC" id="uc008isq.1">
    <molecule id="A2AJA9-1"/>
    <property type="organism name" value="mouse"/>
</dbReference>
<dbReference type="AGR" id="MGI:2685842"/>
<dbReference type="CTD" id="389813"/>
<dbReference type="MGI" id="MGI:2685842">
    <property type="gene designation" value="Ajm1"/>
</dbReference>
<dbReference type="VEuPathDB" id="HostDB:ENSMUSG00000029419"/>
<dbReference type="eggNOG" id="ENOG502QQYV">
    <property type="taxonomic scope" value="Eukaryota"/>
</dbReference>
<dbReference type="GeneTree" id="ENSGT00390000016543"/>
<dbReference type="HOGENOM" id="CLU_012765_0_0_1"/>
<dbReference type="InParanoid" id="A2AJA9"/>
<dbReference type="OMA" id="KEKTHDN"/>
<dbReference type="OrthoDB" id="6431454at2759"/>
<dbReference type="PhylomeDB" id="A2AJA9"/>
<dbReference type="TreeFam" id="TF323946"/>
<dbReference type="BioGRID-ORCS" id="381353">
    <property type="hits" value="0 hits in 71 CRISPR screens"/>
</dbReference>
<dbReference type="CD-CODE" id="CE726F99">
    <property type="entry name" value="Postsynaptic density"/>
</dbReference>
<dbReference type="PRO" id="PR:A2AJA9"/>
<dbReference type="Proteomes" id="UP000000589">
    <property type="component" value="Chromosome 2"/>
</dbReference>
<dbReference type="RNAct" id="A2AJA9">
    <property type="molecule type" value="protein"/>
</dbReference>
<dbReference type="Bgee" id="ENSMUSG00000029419">
    <property type="expression patterns" value="Expressed in lumbar subsegment of spinal cord and 70 other cell types or tissues"/>
</dbReference>
<dbReference type="ExpressionAtlas" id="A2AJA9">
    <property type="expression patterns" value="baseline and differential"/>
</dbReference>
<dbReference type="GO" id="GO:0005912">
    <property type="term" value="C:adherens junction"/>
    <property type="evidence" value="ECO:0007669"/>
    <property type="project" value="UniProtKB-SubCell"/>
</dbReference>
<dbReference type="GO" id="GO:0016324">
    <property type="term" value="C:apical plasma membrane"/>
    <property type="evidence" value="ECO:0007669"/>
    <property type="project" value="UniProtKB-SubCell"/>
</dbReference>
<dbReference type="GO" id="GO:0005929">
    <property type="term" value="C:cilium"/>
    <property type="evidence" value="ECO:0007669"/>
    <property type="project" value="UniProtKB-SubCell"/>
</dbReference>
<dbReference type="GO" id="GO:0045216">
    <property type="term" value="P:cell-cell junction organization"/>
    <property type="evidence" value="ECO:0007669"/>
    <property type="project" value="InterPro"/>
</dbReference>
<dbReference type="InterPro" id="IPR038825">
    <property type="entry name" value="Apical_junction"/>
</dbReference>
<dbReference type="PANTHER" id="PTHR21517">
    <property type="entry name" value="APICAL JUNCTION COMPONENT 1 HOMOLOG"/>
    <property type="match status" value="1"/>
</dbReference>
<dbReference type="PANTHER" id="PTHR21517:SF3">
    <property type="entry name" value="APICAL JUNCTION COMPONENT 1 HOMOLOG"/>
    <property type="match status" value="1"/>
</dbReference>
<organism>
    <name type="scientific">Mus musculus</name>
    <name type="common">Mouse</name>
    <dbReference type="NCBI Taxonomy" id="10090"/>
    <lineage>
        <taxon>Eukaryota</taxon>
        <taxon>Metazoa</taxon>
        <taxon>Chordata</taxon>
        <taxon>Craniata</taxon>
        <taxon>Vertebrata</taxon>
        <taxon>Euteleostomi</taxon>
        <taxon>Mammalia</taxon>
        <taxon>Eutheria</taxon>
        <taxon>Euarchontoglires</taxon>
        <taxon>Glires</taxon>
        <taxon>Rodentia</taxon>
        <taxon>Myomorpha</taxon>
        <taxon>Muroidea</taxon>
        <taxon>Muridae</taxon>
        <taxon>Murinae</taxon>
        <taxon>Mus</taxon>
        <taxon>Mus</taxon>
    </lineage>
</organism>
<reference key="1">
    <citation type="journal article" date="2009" name="PLoS Biol.">
        <title>Lineage-specific biology revealed by a finished genome assembly of the mouse.</title>
        <authorList>
            <person name="Church D.M."/>
            <person name="Goodstadt L."/>
            <person name="Hillier L.W."/>
            <person name="Zody M.C."/>
            <person name="Goldstein S."/>
            <person name="She X."/>
            <person name="Bult C.J."/>
            <person name="Agarwala R."/>
            <person name="Cherry J.L."/>
            <person name="DiCuccio M."/>
            <person name="Hlavina W."/>
            <person name="Kapustin Y."/>
            <person name="Meric P."/>
            <person name="Maglott D."/>
            <person name="Birtle Z."/>
            <person name="Marques A.C."/>
            <person name="Graves T."/>
            <person name="Zhou S."/>
            <person name="Teague B."/>
            <person name="Potamousis K."/>
            <person name="Churas C."/>
            <person name="Place M."/>
            <person name="Herschleb J."/>
            <person name="Runnheim R."/>
            <person name="Forrest D."/>
            <person name="Amos-Landgraf J."/>
            <person name="Schwartz D.C."/>
            <person name="Cheng Z."/>
            <person name="Lindblad-Toh K."/>
            <person name="Eichler E.E."/>
            <person name="Ponting C.P."/>
        </authorList>
    </citation>
    <scope>NUCLEOTIDE SEQUENCE [LARGE SCALE GENOMIC DNA]</scope>
    <source>
        <strain>C57BL/6J</strain>
    </source>
</reference>
<reference key="2">
    <citation type="journal article" date="2004" name="Genome Res.">
        <title>The status, quality, and expansion of the NIH full-length cDNA project: the Mammalian Gene Collection (MGC).</title>
        <authorList>
            <consortium name="The MGC Project Team"/>
        </authorList>
    </citation>
    <scope>NUCLEOTIDE SEQUENCE [LARGE SCALE MRNA]</scope>
    <source>
        <strain>C57BL/6J</strain>
        <tissue>Brain</tissue>
    </source>
</reference>
<reference key="3">
    <citation type="journal article" date="2006" name="Mol. Cell. Proteomics">
        <title>Comprehensive identification of phosphorylation sites in postsynaptic density preparations.</title>
        <authorList>
            <person name="Trinidad J.C."/>
            <person name="Specht C.G."/>
            <person name="Thalhammer A."/>
            <person name="Schoepfer R."/>
            <person name="Burlingame A.L."/>
        </authorList>
    </citation>
    <scope>PHOSPHORYLATION [LARGE SCALE ANALYSIS] AT SER-129</scope>
    <scope>IDENTIFICATION BY MASS SPECTROMETRY [LARGE SCALE ANALYSIS]</scope>
    <source>
        <tissue>Brain</tissue>
    </source>
</reference>
<reference key="4">
    <citation type="journal article" date="2007" name="Mol. Cell. Proteomics">
        <title>Qualitative and quantitative analyses of protein phosphorylation in naive and stimulated mouse synaptosomal preparations.</title>
        <authorList>
            <person name="Munton R.P."/>
            <person name="Tweedie-Cullen R."/>
            <person name="Livingstone-Zatchej M."/>
            <person name="Weinandy F."/>
            <person name="Waidelich M."/>
            <person name="Longo D."/>
            <person name="Gehrig P."/>
            <person name="Potthast F."/>
            <person name="Rutishauser D."/>
            <person name="Gerrits B."/>
            <person name="Panse C."/>
            <person name="Schlapbach R."/>
            <person name="Mansuy I.M."/>
        </authorList>
    </citation>
    <scope>IDENTIFICATION BY MASS SPECTROMETRY [LARGE SCALE ANALYSIS]</scope>
    <source>
        <tissue>Brain cortex</tissue>
    </source>
</reference>
<reference key="5">
    <citation type="journal article" date="2010" name="Cell">
        <title>A tissue-specific atlas of mouse protein phosphorylation and expression.</title>
        <authorList>
            <person name="Huttlin E.L."/>
            <person name="Jedrychowski M.P."/>
            <person name="Elias J.E."/>
            <person name="Goswami T."/>
            <person name="Rad R."/>
            <person name="Beausoleil S.A."/>
            <person name="Villen J."/>
            <person name="Haas W."/>
            <person name="Sowa M.E."/>
            <person name="Gygi S.P."/>
        </authorList>
    </citation>
    <scope>PHOSPHORYLATION [LARGE SCALE ANALYSIS] AT SER-52; SER-468; SER-509; SER-512 AND SER-593</scope>
    <scope>IDENTIFICATION BY MASS SPECTROMETRY [LARGE SCALE ANALYSIS]</scope>
    <source>
        <tissue>Brain</tissue>
    </source>
</reference>
<reference key="6">
    <citation type="journal article" date="2014" name="Mol. Cell. Proteomics">
        <title>Immunoaffinity enrichment and mass spectrometry analysis of protein methylation.</title>
        <authorList>
            <person name="Guo A."/>
            <person name="Gu H."/>
            <person name="Zhou J."/>
            <person name="Mulhern D."/>
            <person name="Wang Y."/>
            <person name="Lee K.A."/>
            <person name="Yang V."/>
            <person name="Aguiar M."/>
            <person name="Kornhauser J."/>
            <person name="Jia X."/>
            <person name="Ren J."/>
            <person name="Beausoleil S.A."/>
            <person name="Silva J.C."/>
            <person name="Vemulapalli V."/>
            <person name="Bedford M.T."/>
            <person name="Comb M.J."/>
        </authorList>
    </citation>
    <scope>METHYLATION [LARGE SCALE ANALYSIS] AT ARG-322 AND ARG-749</scope>
    <scope>IDENTIFICATION BY MASS SPECTROMETRY [LARGE SCALE ANALYSIS]</scope>
    <source>
        <tissue>Brain</tissue>
    </source>
</reference>
<accession>A2AJA9</accession>
<accession>Q6P0A3</accession>
<gene>
    <name type="primary">Ajm1</name>
    <name type="synonym">Gm996</name>
</gene>
<keyword id="KW-0025">Alternative splicing</keyword>
<keyword id="KW-0965">Cell junction</keyword>
<keyword id="KW-1003">Cell membrane</keyword>
<keyword id="KW-0966">Cell projection</keyword>
<keyword id="KW-0472">Membrane</keyword>
<keyword id="KW-0488">Methylation</keyword>
<keyword id="KW-0597">Phosphoprotein</keyword>
<keyword id="KW-1185">Reference proteome</keyword>
<feature type="chain" id="PRO_0000392545" description="Apical junction component 1 homolog">
    <location>
        <begin position="1"/>
        <end position="974"/>
    </location>
</feature>
<feature type="region of interest" description="Disordered" evidence="2">
    <location>
        <begin position="23"/>
        <end position="137"/>
    </location>
</feature>
<feature type="region of interest" description="Disordered" evidence="2">
    <location>
        <begin position="201"/>
        <end position="233"/>
    </location>
</feature>
<feature type="region of interest" description="Disordered" evidence="2">
    <location>
        <begin position="306"/>
        <end position="326"/>
    </location>
</feature>
<feature type="region of interest" description="Disordered" evidence="2">
    <location>
        <begin position="539"/>
        <end position="576"/>
    </location>
</feature>
<feature type="region of interest" description="Disordered" evidence="2">
    <location>
        <begin position="618"/>
        <end position="661"/>
    </location>
</feature>
<feature type="compositionally biased region" description="Pro residues" evidence="2">
    <location>
        <begin position="69"/>
        <end position="79"/>
    </location>
</feature>
<feature type="compositionally biased region" description="Basic and acidic residues" evidence="2">
    <location>
        <begin position="116"/>
        <end position="134"/>
    </location>
</feature>
<feature type="compositionally biased region" description="Polar residues" evidence="2">
    <location>
        <begin position="201"/>
        <end position="216"/>
    </location>
</feature>
<feature type="compositionally biased region" description="Low complexity" evidence="2">
    <location>
        <begin position="623"/>
        <end position="636"/>
    </location>
</feature>
<feature type="modified residue" description="Phosphoserine" evidence="5">
    <location>
        <position position="52"/>
    </location>
</feature>
<feature type="modified residue" description="Phosphoserine" evidence="4">
    <location>
        <position position="129"/>
    </location>
</feature>
<feature type="modified residue" description="Omega-N-methylarginine" evidence="6">
    <location>
        <position position="322"/>
    </location>
</feature>
<feature type="modified residue" description="Phosphoserine" evidence="5">
    <location>
        <position position="468"/>
    </location>
</feature>
<feature type="modified residue" description="Phosphoserine" evidence="5">
    <location>
        <position position="509"/>
    </location>
</feature>
<feature type="modified residue" description="Phosphoserine" evidence="5">
    <location>
        <position position="512"/>
    </location>
</feature>
<feature type="modified residue" description="Phosphoserine" evidence="5">
    <location>
        <position position="593"/>
    </location>
</feature>
<feature type="modified residue" description="Asymmetric dimethylarginine; alternate" evidence="6">
    <location>
        <position position="749"/>
    </location>
</feature>
<feature type="modified residue" description="Omega-N-methylarginine; alternate" evidence="6">
    <location>
        <position position="749"/>
    </location>
</feature>
<feature type="splice variant" id="VSP_038820" description="In isoform 2." evidence="3">
    <location>
        <begin position="202"/>
        <end position="234"/>
    </location>
</feature>
<comment type="function">
    <text evidence="1">May be involved in the control of adherens junction integrity.</text>
</comment>
<comment type="subcellular location">
    <subcellularLocation>
        <location evidence="1">Apical cell membrane</location>
    </subcellularLocation>
    <subcellularLocation>
        <location evidence="1">Cell projection</location>
        <location evidence="1">Cilium</location>
    </subcellularLocation>
    <subcellularLocation>
        <location evidence="1">Cell junction</location>
        <location evidence="1">Adherens junction</location>
    </subcellularLocation>
</comment>
<comment type="alternative products">
    <event type="alternative splicing"/>
    <isoform>
        <id>A2AJA9-1</id>
        <name>1</name>
        <sequence type="displayed"/>
    </isoform>
    <isoform>
        <id>A2AJA9-2</id>
        <name>2</name>
        <sequence type="described" ref="VSP_038820"/>
    </isoform>
</comment>
<evidence type="ECO:0000250" key="1">
    <source>
        <dbReference type="UniProtKB" id="A0A1C3NSL9"/>
    </source>
</evidence>
<evidence type="ECO:0000256" key="2">
    <source>
        <dbReference type="SAM" id="MobiDB-lite"/>
    </source>
</evidence>
<evidence type="ECO:0000305" key="3"/>
<evidence type="ECO:0007744" key="4">
    <source>
    </source>
</evidence>
<evidence type="ECO:0007744" key="5">
    <source>
    </source>
</evidence>
<evidence type="ECO:0007744" key="6">
    <source>
    </source>
</evidence>
<protein>
    <recommendedName>
        <fullName evidence="3">Apical junction component 1 homolog</fullName>
    </recommendedName>
</protein>
<proteinExistence type="evidence at protein level"/>
<name>AJM1_MOUSE</name>